<dbReference type="EMBL" id="BC100229">
    <property type="protein sequence ID" value="AAI00230.1"/>
    <property type="molecule type" value="mRNA"/>
</dbReference>
<dbReference type="RefSeq" id="NP_001087086.1">
    <property type="nucleotide sequence ID" value="NM_001093617.1"/>
</dbReference>
<dbReference type="SMR" id="Q498G2"/>
<dbReference type="GeneID" id="446951"/>
<dbReference type="KEGG" id="xla:446951"/>
<dbReference type="AGR" id="Xenbase:XB-GENE-988613"/>
<dbReference type="CTD" id="446951"/>
<dbReference type="Xenbase" id="XB-GENE-988613">
    <property type="gene designation" value="cep152.L"/>
</dbReference>
<dbReference type="OrthoDB" id="10064205at2759"/>
<dbReference type="Proteomes" id="UP000186698">
    <property type="component" value="Chromosome 3L"/>
</dbReference>
<dbReference type="Bgee" id="446951">
    <property type="expression patterns" value="Expressed in egg cell and 11 other cell types or tissues"/>
</dbReference>
<dbReference type="GO" id="GO:0005814">
    <property type="term" value="C:centriole"/>
    <property type="evidence" value="ECO:0000250"/>
    <property type="project" value="UniProtKB"/>
</dbReference>
<dbReference type="GO" id="GO:0005813">
    <property type="term" value="C:centrosome"/>
    <property type="evidence" value="ECO:0000318"/>
    <property type="project" value="GO_Central"/>
</dbReference>
<dbReference type="GO" id="GO:0005737">
    <property type="term" value="C:cytoplasm"/>
    <property type="evidence" value="ECO:0007669"/>
    <property type="project" value="UniProtKB-KW"/>
</dbReference>
<dbReference type="GO" id="GO:0098536">
    <property type="term" value="C:deuterosome"/>
    <property type="evidence" value="ECO:0000314"/>
    <property type="project" value="UniProtKB"/>
</dbReference>
<dbReference type="GO" id="GO:0000242">
    <property type="term" value="C:pericentriolar material"/>
    <property type="evidence" value="ECO:0000250"/>
    <property type="project" value="UniProtKB"/>
</dbReference>
<dbReference type="GO" id="GO:0030030">
    <property type="term" value="P:cell projection organization"/>
    <property type="evidence" value="ECO:0007669"/>
    <property type="project" value="UniProtKB-KW"/>
</dbReference>
<dbReference type="GO" id="GO:0007099">
    <property type="term" value="P:centriole replication"/>
    <property type="evidence" value="ECO:0000250"/>
    <property type="project" value="UniProtKB"/>
</dbReference>
<dbReference type="GO" id="GO:0098535">
    <property type="term" value="P:de novo centriole assembly involved in multi-ciliated epithelial cell differentiation"/>
    <property type="evidence" value="ECO:0000314"/>
    <property type="project" value="UniProtKB"/>
</dbReference>
<dbReference type="InterPro" id="IPR051235">
    <property type="entry name" value="CEP152/SHC-Transforming"/>
</dbReference>
<dbReference type="PANTHER" id="PTHR10337:SF6">
    <property type="entry name" value="CENTROSOMAL PROTEIN OF 152 KDA"/>
    <property type="match status" value="1"/>
</dbReference>
<dbReference type="PANTHER" id="PTHR10337">
    <property type="entry name" value="SHC TRANSFORMING PROTEIN"/>
    <property type="match status" value="1"/>
</dbReference>
<gene>
    <name type="primary">cep152</name>
</gene>
<sequence>MSIDFDSGALQTQQEDEEYDKEDYAREQELQQLLTDLPHDMLDDSLSSSPEPSYSDCSGHEISEKIPQWEHGANWGNDDLPNHQKPYKNGFTENQYCMGFVGKQDEHLRNQAGRDKMSNGWDVLHANEDDPMFNGKYRYSKDHAYNSESNGQAFHGGDHYDAPGHCSSSELYHLPDDFQPYTNCQQVEHFPDSKKEHFQGFAVPEETSKISTEPFQVKYNPYQIKVARMDEMNQDPERRDGNFDDLQREFLDTGENSTGNMQFVQLQVLYKARGRQLEEQNNKLEESERQIRYLNHQLAIVKDQKDGLTISLQESQSLLQNSREMEIQLKGQLTALEKTVESLTTNEEQLRKELNISKVAMESFQQQLLDLRRSESIQRAREQHETVVSMLKKKHEEQVLALQQKLDDVNAMLNEEKELCSRLETRLKLSERKEAESKLEKTDIINRLSKSLEESQKQCANLLQSGSIQEATQLRLQLQQVQSSKIINDGMNKALQEEVRELQEQITMYESAARLGAFVNSGEEQQLSDSYVELGIKNFNWQKSRLGRIVANNGVKNDLSSEEIILELKTELERCLNSNKTKRKQIVQLQAELKGHLLKNEELKKSMEIAERTARDSQIQAENLANKVNNSPFYSSSSDRFREEIQKLQSEKQILQQENEKHLLFIKEFTVNEEKLKASNQELCNEMRGMIQDFDQDKKEAIERCERTYEQHNEDIKAHLLNELYEKFESEKELLSQGYEEKITLLQAQMNEIHREMAAVQECYIAVCKEKDALEENMREHFKKELQKSEEEVTAKAIQDVEMEWAQKLNQALQDAKTKSLQSFETQTIQTDESSLAKSDLNSDCIDELKVKLQNAIQEKEKAVHQAQLELEERHHEETSKQVEVALTRAYGRWLQELTSLPEYKARLKLEQEKWEKTNERNVERQVSDALYAAEIKWKMRSDKVDFTVRQKEFEEKIASMKRELELKAEESQALLKAEIATSRAQWNKEKHDEIQRLREDNEKDYRVFLDEHRNKLTDTLSTAKVEFEKQKNELIAQKDREMAERLDESLKQWALDESRRMRALENEILSEVEQCMYEIHDQLLDKSIVKDRLPSMKSNLDVTFLEKLKACLQKSVKGILYKVLANARQDWKKKYDTESNQETGIRGGELEGSDDRKTAKMWYLDKDLGKTEKQPCCEHWVQQLEKSKKECYEIRSKLEKACRHLQQLVKEQKLKAEKYRKNHILTEELKKQNSELQKKLELTVAPSPACLEPVEGGSNGCMMCNGNALEEIRAQYIKAVDKIKNDMLRYIHESKGRAAELLKSEVLRERQETARKMRKYYLTCLQQLLKDDGNNEGAEKKIINAASKLATMAKVLETPVSQKYQSKSLNSDLPQNENFLSETTQDQRSLQKPAHSHQNNNPLNQNIDQQTIEELIKRHVREKSDGNKVTDAEGASAINENSSFPTLRKSLVDNGNSQFVPSAPFQKLKTFSCIDSSTEGVLVTHQNKQSALQSGTLYPNSEHPKKKPGLQRFDLQETPVRDENGSNDWSCISSKSLFQPHSAKGSLTQLKMGPQNADVEEHSSAVASCSLAEENHNTFSSGARNQHFFAQVAKRKDENSGRKYSNKIQEPSATGIHPESKLFSDVGQGNKLPSRKLLLDFTLSPQQDSGFDSPFPNLNNFN</sequence>
<comment type="function">
    <text evidence="1 4">Necessary for centrosome duplication; the function also seems to involve cep63, cdk5rap2 and wdr62 through a stepwise assembled complex at the centrosome that recruits cdk2 required for centriole duplication. Acts as a molecular scaffold facilitating the interaction of plk4 and cpap, 2 molecules involved in centriole formation (By similarity). Also plays a key role in deuterosome-mediated centriole amplification in multiciliated that can generate more than 100 centrioles (PubMed:24075808). Overexpression of cep152 can drive amplification of centrioles (By similarity).</text>
</comment>
<comment type="subcellular location">
    <subcellularLocation>
        <location evidence="4">Cytoplasm</location>
        <location evidence="4">Cytoskeleton</location>
        <location evidence="4">Microtubule organizing center</location>
        <location evidence="4">Centrosome</location>
    </subcellularLocation>
    <subcellularLocation>
        <location evidence="1">Cytoplasm</location>
        <location evidence="1">Cytoskeleton</location>
        <location evidence="1">Microtubule organizing center</location>
        <location evidence="1">Centrosome</location>
        <location evidence="1">Centriole</location>
    </subcellularLocation>
    <text evidence="1 4">Colocalizes with cdk5rap2, wdr62 and cep63 in a discrete ring around the proximal end of the parental centriole. At this site, a cohesive structure is predicted to engage parental centrioles and procentrioles (By similarity). Localizes to the deuterosome (PubMed:24075808). Localizes to pericentriolar material (PCM) (By similarity).</text>
</comment>
<comment type="similarity">
    <text evidence="5">Belongs to the CEP152 family.</text>
</comment>
<organism>
    <name type="scientific">Xenopus laevis</name>
    <name type="common">African clawed frog</name>
    <dbReference type="NCBI Taxonomy" id="8355"/>
    <lineage>
        <taxon>Eukaryota</taxon>
        <taxon>Metazoa</taxon>
        <taxon>Chordata</taxon>
        <taxon>Craniata</taxon>
        <taxon>Vertebrata</taxon>
        <taxon>Euteleostomi</taxon>
        <taxon>Amphibia</taxon>
        <taxon>Batrachia</taxon>
        <taxon>Anura</taxon>
        <taxon>Pipoidea</taxon>
        <taxon>Pipidae</taxon>
        <taxon>Xenopodinae</taxon>
        <taxon>Xenopus</taxon>
        <taxon>Xenopus</taxon>
    </lineage>
</organism>
<proteinExistence type="evidence at transcript level"/>
<reference key="1">
    <citation type="submission" date="2005-08" db="EMBL/GenBank/DDBJ databases">
        <authorList>
            <consortium name="NIH - Xenopus Gene Collection (XGC) project"/>
        </authorList>
    </citation>
    <scope>NUCLEOTIDE SEQUENCE [LARGE SCALE MRNA]</scope>
    <source>
        <tissue>Oocyte</tissue>
    </source>
</reference>
<reference key="2">
    <citation type="journal article" date="2013" name="Dev. Cell">
        <title>Deuterosome-mediated centriole biogenesis.</title>
        <authorList>
            <person name="Klos Dehring D.A."/>
            <person name="Vladar E.K."/>
            <person name="Werner M.E."/>
            <person name="Mitchell J.W."/>
            <person name="Hwang P."/>
            <person name="Mitchell B.J."/>
        </authorList>
    </citation>
    <scope>FUNCTION</scope>
    <scope>SUBCELLULAR LOCATION</scope>
</reference>
<name>CE152_XENLA</name>
<protein>
    <recommendedName>
        <fullName>Centrosomal protein of 152 kDa</fullName>
        <shortName>Cep152</shortName>
    </recommendedName>
</protein>
<feature type="chain" id="PRO_0000424821" description="Centrosomal protein of 152 kDa">
    <location>
        <begin position="1"/>
        <end position="1663"/>
    </location>
</feature>
<feature type="region of interest" description="Disordered" evidence="3">
    <location>
        <begin position="1"/>
        <end position="60"/>
    </location>
</feature>
<feature type="region of interest" description="Disordered" evidence="3">
    <location>
        <begin position="1383"/>
        <end position="1408"/>
    </location>
</feature>
<feature type="region of interest" description="Disordered" evidence="3">
    <location>
        <begin position="1595"/>
        <end position="1628"/>
    </location>
</feature>
<feature type="coiled-coil region" evidence="2">
    <location>
        <begin position="266"/>
        <end position="516"/>
    </location>
</feature>
<feature type="coiled-coil region" evidence="2">
    <location>
        <begin position="571"/>
        <end position="664"/>
    </location>
</feature>
<feature type="coiled-coil region" evidence="2">
    <location>
        <begin position="696"/>
        <end position="796"/>
    </location>
</feature>
<feature type="coiled-coil region" evidence="2">
    <location>
        <begin position="843"/>
        <end position="886"/>
    </location>
</feature>
<feature type="coiled-coil region" evidence="2">
    <location>
        <begin position="946"/>
        <end position="977"/>
    </location>
</feature>
<feature type="coiled-coil region" evidence="2">
    <location>
        <begin position="1014"/>
        <end position="1047"/>
    </location>
</feature>
<feature type="coiled-coil region" evidence="2">
    <location>
        <begin position="1182"/>
        <end position="1288"/>
    </location>
</feature>
<feature type="compositionally biased region" description="Low complexity" evidence="3">
    <location>
        <begin position="44"/>
        <end position="57"/>
    </location>
</feature>
<feature type="compositionally biased region" description="Polar residues" evidence="3">
    <location>
        <begin position="1603"/>
        <end position="1613"/>
    </location>
</feature>
<accession>Q498G2</accession>
<evidence type="ECO:0000250" key="1">
    <source>
        <dbReference type="UniProtKB" id="O94986"/>
    </source>
</evidence>
<evidence type="ECO:0000255" key="2"/>
<evidence type="ECO:0000256" key="3">
    <source>
        <dbReference type="SAM" id="MobiDB-lite"/>
    </source>
</evidence>
<evidence type="ECO:0000269" key="4">
    <source>
    </source>
</evidence>
<evidence type="ECO:0000305" key="5"/>
<keyword id="KW-0970">Cilium biogenesis/degradation</keyword>
<keyword id="KW-0175">Coiled coil</keyword>
<keyword id="KW-0963">Cytoplasm</keyword>
<keyword id="KW-0206">Cytoskeleton</keyword>
<keyword id="KW-1185">Reference proteome</keyword>